<reference key="1">
    <citation type="journal article" date="2008" name="Genome Biol.">
        <title>The complete genome, comparative and functional analysis of Stenotrophomonas maltophilia reveals an organism heavily shielded by drug resistance determinants.</title>
        <authorList>
            <person name="Crossman L.C."/>
            <person name="Gould V.C."/>
            <person name="Dow J.M."/>
            <person name="Vernikos G.S."/>
            <person name="Okazaki A."/>
            <person name="Sebaihia M."/>
            <person name="Saunders D."/>
            <person name="Arrowsmith C."/>
            <person name="Carver T."/>
            <person name="Peters N."/>
            <person name="Adlem E."/>
            <person name="Kerhornou A."/>
            <person name="Lord A."/>
            <person name="Murphy L."/>
            <person name="Seeger K."/>
            <person name="Squares R."/>
            <person name="Rutter S."/>
            <person name="Quail M.A."/>
            <person name="Rajandream M.A."/>
            <person name="Harris D."/>
            <person name="Churcher C."/>
            <person name="Bentley S.D."/>
            <person name="Parkhill J."/>
            <person name="Thomson N.R."/>
            <person name="Avison M.B."/>
        </authorList>
    </citation>
    <scope>NUCLEOTIDE SEQUENCE [LARGE SCALE GENOMIC DNA]</scope>
    <source>
        <strain>K279a</strain>
    </source>
</reference>
<feature type="chain" id="PRO_1000187819" description="Ubiquinone/menaquinone biosynthesis C-methyltransferase UbiE">
    <location>
        <begin position="1"/>
        <end position="253"/>
    </location>
</feature>
<feature type="binding site" evidence="1">
    <location>
        <position position="76"/>
    </location>
    <ligand>
        <name>S-adenosyl-L-methionine</name>
        <dbReference type="ChEBI" id="CHEBI:59789"/>
    </ligand>
</feature>
<feature type="binding site" evidence="1">
    <location>
        <position position="97"/>
    </location>
    <ligand>
        <name>S-adenosyl-L-methionine</name>
        <dbReference type="ChEBI" id="CHEBI:59789"/>
    </ligand>
</feature>
<feature type="binding site" evidence="1">
    <location>
        <begin position="125"/>
        <end position="126"/>
    </location>
    <ligand>
        <name>S-adenosyl-L-methionine</name>
        <dbReference type="ChEBI" id="CHEBI:59789"/>
    </ligand>
</feature>
<evidence type="ECO:0000255" key="1">
    <source>
        <dbReference type="HAMAP-Rule" id="MF_01813"/>
    </source>
</evidence>
<dbReference type="EC" id="2.1.1.163" evidence="1"/>
<dbReference type="EC" id="2.1.1.201" evidence="1"/>
<dbReference type="EMBL" id="AM743169">
    <property type="protein sequence ID" value="CAQ47456.1"/>
    <property type="molecule type" value="Genomic_DNA"/>
</dbReference>
<dbReference type="RefSeq" id="WP_012481297.1">
    <property type="nucleotide sequence ID" value="NC_010943.1"/>
</dbReference>
<dbReference type="SMR" id="B2FUU6"/>
<dbReference type="EnsemblBacteria" id="CAQ47456">
    <property type="protein sequence ID" value="CAQ47456"/>
    <property type="gene ID" value="Smlt4065"/>
</dbReference>
<dbReference type="KEGG" id="sml:Smlt4065"/>
<dbReference type="PATRIC" id="fig|522373.3.peg.3834"/>
<dbReference type="eggNOG" id="COG2226">
    <property type="taxonomic scope" value="Bacteria"/>
</dbReference>
<dbReference type="HOGENOM" id="CLU_037990_0_0_6"/>
<dbReference type="UniPathway" id="UPA00079">
    <property type="reaction ID" value="UER00169"/>
</dbReference>
<dbReference type="UniPathway" id="UPA00232"/>
<dbReference type="Proteomes" id="UP000008840">
    <property type="component" value="Chromosome"/>
</dbReference>
<dbReference type="GO" id="GO:0008425">
    <property type="term" value="F:2-methoxy-6-polyprenyl-1,4-benzoquinol methyltransferase activity"/>
    <property type="evidence" value="ECO:0007669"/>
    <property type="project" value="UniProtKB-UniRule"/>
</dbReference>
<dbReference type="GO" id="GO:0043770">
    <property type="term" value="F:demethylmenaquinone methyltransferase activity"/>
    <property type="evidence" value="ECO:0007669"/>
    <property type="project" value="UniProtKB-UniRule"/>
</dbReference>
<dbReference type="GO" id="GO:0009060">
    <property type="term" value="P:aerobic respiration"/>
    <property type="evidence" value="ECO:0007669"/>
    <property type="project" value="UniProtKB-UniRule"/>
</dbReference>
<dbReference type="GO" id="GO:0009234">
    <property type="term" value="P:menaquinone biosynthetic process"/>
    <property type="evidence" value="ECO:0007669"/>
    <property type="project" value="UniProtKB-UniRule"/>
</dbReference>
<dbReference type="GO" id="GO:0032259">
    <property type="term" value="P:methylation"/>
    <property type="evidence" value="ECO:0007669"/>
    <property type="project" value="UniProtKB-KW"/>
</dbReference>
<dbReference type="CDD" id="cd02440">
    <property type="entry name" value="AdoMet_MTases"/>
    <property type="match status" value="1"/>
</dbReference>
<dbReference type="Gene3D" id="3.40.50.150">
    <property type="entry name" value="Vaccinia Virus protein VP39"/>
    <property type="match status" value="1"/>
</dbReference>
<dbReference type="HAMAP" id="MF_01813">
    <property type="entry name" value="MenG_UbiE_methyltr"/>
    <property type="match status" value="1"/>
</dbReference>
<dbReference type="InterPro" id="IPR029063">
    <property type="entry name" value="SAM-dependent_MTases_sf"/>
</dbReference>
<dbReference type="InterPro" id="IPR004033">
    <property type="entry name" value="UbiE/COQ5_MeTrFase"/>
</dbReference>
<dbReference type="InterPro" id="IPR023576">
    <property type="entry name" value="UbiE/COQ5_MeTrFase_CS"/>
</dbReference>
<dbReference type="NCBIfam" id="TIGR01934">
    <property type="entry name" value="MenG_MenH_UbiE"/>
    <property type="match status" value="1"/>
</dbReference>
<dbReference type="NCBIfam" id="NF001242">
    <property type="entry name" value="PRK00216.1-3"/>
    <property type="match status" value="1"/>
</dbReference>
<dbReference type="NCBIfam" id="NF001244">
    <property type="entry name" value="PRK00216.1-5"/>
    <property type="match status" value="1"/>
</dbReference>
<dbReference type="PANTHER" id="PTHR43591:SF24">
    <property type="entry name" value="2-METHOXY-6-POLYPRENYL-1,4-BENZOQUINOL METHYLASE, MITOCHONDRIAL"/>
    <property type="match status" value="1"/>
</dbReference>
<dbReference type="PANTHER" id="PTHR43591">
    <property type="entry name" value="METHYLTRANSFERASE"/>
    <property type="match status" value="1"/>
</dbReference>
<dbReference type="Pfam" id="PF01209">
    <property type="entry name" value="Ubie_methyltran"/>
    <property type="match status" value="1"/>
</dbReference>
<dbReference type="SUPFAM" id="SSF53335">
    <property type="entry name" value="S-adenosyl-L-methionine-dependent methyltransferases"/>
    <property type="match status" value="1"/>
</dbReference>
<dbReference type="PROSITE" id="PS51608">
    <property type="entry name" value="SAM_MT_UBIE"/>
    <property type="match status" value="1"/>
</dbReference>
<dbReference type="PROSITE" id="PS01183">
    <property type="entry name" value="UBIE_1"/>
    <property type="match status" value="1"/>
</dbReference>
<dbReference type="PROSITE" id="PS01184">
    <property type="entry name" value="UBIE_2"/>
    <property type="match status" value="1"/>
</dbReference>
<proteinExistence type="inferred from homology"/>
<gene>
    <name evidence="1" type="primary">ubiE</name>
    <name type="ordered locus">Smlt4065</name>
</gene>
<sequence length="253" mass="28006">MSESPYKAGTTHFGFRDVAAKDKQKLVGQVFTSVARNYDLMNDLMSLGVHRAWKRYYVATAQVKPGDRVLDLAGGTGDIAALLKERVGAEGSVVLGDINAGMLSVGRDRLTNRGLVLGLDYVQCNAEALPFLDNSFDLVTIAFGLRNVTDKDAGLREMYRVLKVGGQARVLEFSEVTADWFKPIYDFHSFKILPKLGKLFANDSDSYQYLAESIRKHPPQDELKAMMGQAGFERCHYKNLTGGIVSIHSGYKL</sequence>
<name>UBIE_STRMK</name>
<keyword id="KW-0474">Menaquinone biosynthesis</keyword>
<keyword id="KW-0489">Methyltransferase</keyword>
<keyword id="KW-1185">Reference proteome</keyword>
<keyword id="KW-0949">S-adenosyl-L-methionine</keyword>
<keyword id="KW-0808">Transferase</keyword>
<keyword id="KW-0831">Ubiquinone biosynthesis</keyword>
<organism>
    <name type="scientific">Stenotrophomonas maltophilia (strain K279a)</name>
    <dbReference type="NCBI Taxonomy" id="522373"/>
    <lineage>
        <taxon>Bacteria</taxon>
        <taxon>Pseudomonadati</taxon>
        <taxon>Pseudomonadota</taxon>
        <taxon>Gammaproteobacteria</taxon>
        <taxon>Lysobacterales</taxon>
        <taxon>Lysobacteraceae</taxon>
        <taxon>Stenotrophomonas</taxon>
        <taxon>Stenotrophomonas maltophilia group</taxon>
    </lineage>
</organism>
<comment type="function">
    <text evidence="1">Methyltransferase required for the conversion of demethylmenaquinol (DMKH2) to menaquinol (MKH2) and the conversion of 2-polyprenyl-6-methoxy-1,4-benzoquinol (DDMQH2) to 2-polyprenyl-3-methyl-6-methoxy-1,4-benzoquinol (DMQH2).</text>
</comment>
<comment type="catalytic activity">
    <reaction evidence="1">
        <text>a 2-demethylmenaquinol + S-adenosyl-L-methionine = a menaquinol + S-adenosyl-L-homocysteine + H(+)</text>
        <dbReference type="Rhea" id="RHEA:42640"/>
        <dbReference type="Rhea" id="RHEA-COMP:9539"/>
        <dbReference type="Rhea" id="RHEA-COMP:9563"/>
        <dbReference type="ChEBI" id="CHEBI:15378"/>
        <dbReference type="ChEBI" id="CHEBI:18151"/>
        <dbReference type="ChEBI" id="CHEBI:55437"/>
        <dbReference type="ChEBI" id="CHEBI:57856"/>
        <dbReference type="ChEBI" id="CHEBI:59789"/>
        <dbReference type="EC" id="2.1.1.163"/>
    </reaction>
</comment>
<comment type="catalytic activity">
    <reaction evidence="1">
        <text>a 2-methoxy-6-(all-trans-polyprenyl)benzene-1,4-diol + S-adenosyl-L-methionine = a 5-methoxy-2-methyl-3-(all-trans-polyprenyl)benzene-1,4-diol + S-adenosyl-L-homocysteine + H(+)</text>
        <dbReference type="Rhea" id="RHEA:28286"/>
        <dbReference type="Rhea" id="RHEA-COMP:10858"/>
        <dbReference type="Rhea" id="RHEA-COMP:10859"/>
        <dbReference type="ChEBI" id="CHEBI:15378"/>
        <dbReference type="ChEBI" id="CHEBI:57856"/>
        <dbReference type="ChEBI" id="CHEBI:59789"/>
        <dbReference type="ChEBI" id="CHEBI:84166"/>
        <dbReference type="ChEBI" id="CHEBI:84167"/>
        <dbReference type="EC" id="2.1.1.201"/>
    </reaction>
</comment>
<comment type="pathway">
    <text evidence="1">Quinol/quinone metabolism; menaquinone biosynthesis; menaquinol from 1,4-dihydroxy-2-naphthoate: step 2/2.</text>
</comment>
<comment type="pathway">
    <text evidence="1">Cofactor biosynthesis; ubiquinone biosynthesis.</text>
</comment>
<comment type="similarity">
    <text evidence="1">Belongs to the class I-like SAM-binding methyltransferase superfamily. MenG/UbiE family.</text>
</comment>
<protein>
    <recommendedName>
        <fullName evidence="1">Ubiquinone/menaquinone biosynthesis C-methyltransferase UbiE</fullName>
        <ecNumber evidence="1">2.1.1.163</ecNumber>
        <ecNumber evidence="1">2.1.1.201</ecNumber>
    </recommendedName>
    <alternativeName>
        <fullName evidence="1">2-methoxy-6-polyprenyl-1,4-benzoquinol methylase</fullName>
    </alternativeName>
    <alternativeName>
        <fullName evidence="1">Demethylmenaquinone methyltransferase</fullName>
    </alternativeName>
</protein>
<accession>B2FUU6</accession>